<sequence>MTYTTAKAAEKIGISAYTLRFYDKEGLLPNVGRDEYGNRRFTDKDLQWLSLLQCLKNTGMSLKDIKRFAECTIIGDDTIEERLSLFENQTKNVKCQIAELKRYLDLLEYKLAFYQKAKALGSVKAVNLPQIPETS</sequence>
<feature type="chain" id="PRO_0000098166" description="Uncharacterized HTH-type transcriptional regulator HI_0186">
    <location>
        <begin position="1"/>
        <end position="135"/>
    </location>
</feature>
<feature type="domain" description="HTH merR-type" evidence="1">
    <location>
        <begin position="2"/>
        <end position="71"/>
    </location>
</feature>
<feature type="DNA-binding region" description="H-T-H motif" evidence="1">
    <location>
        <begin position="5"/>
        <end position="24"/>
    </location>
</feature>
<feature type="helix" evidence="2">
    <location>
        <begin position="5"/>
        <end position="12"/>
    </location>
</feature>
<feature type="helix" evidence="2">
    <location>
        <begin position="16"/>
        <end position="24"/>
    </location>
</feature>
<feature type="strand" evidence="2">
    <location>
        <begin position="39"/>
        <end position="41"/>
    </location>
</feature>
<feature type="helix" evidence="2">
    <location>
        <begin position="43"/>
        <end position="57"/>
    </location>
</feature>
<feature type="helix" evidence="2">
    <location>
        <begin position="62"/>
        <end position="74"/>
    </location>
</feature>
<feature type="helix" evidence="2">
    <location>
        <begin position="76"/>
        <end position="78"/>
    </location>
</feature>
<feature type="helix" evidence="2">
    <location>
        <begin position="79"/>
        <end position="119"/>
    </location>
</feature>
<dbReference type="EMBL" id="L42023">
    <property type="protein sequence ID" value="AAC21856.1"/>
    <property type="molecule type" value="Genomic_DNA"/>
</dbReference>
<dbReference type="PIR" id="I64052">
    <property type="entry name" value="I64052"/>
</dbReference>
<dbReference type="RefSeq" id="NP_438354.1">
    <property type="nucleotide sequence ID" value="NC_000907.1"/>
</dbReference>
<dbReference type="PDB" id="5D8C">
    <property type="method" value="X-ray"/>
    <property type="resolution" value="2.25 A"/>
    <property type="chains" value="A/B=1-135"/>
</dbReference>
<dbReference type="PDB" id="5D90">
    <property type="method" value="X-ray"/>
    <property type="resolution" value="2.30 A"/>
    <property type="chains" value="A/B/C/D=2-135"/>
</dbReference>
<dbReference type="PDB" id="5E01">
    <property type="method" value="X-ray"/>
    <property type="resolution" value="2.30 A"/>
    <property type="chains" value="A/B=1-126"/>
</dbReference>
<dbReference type="PDBsum" id="5D8C"/>
<dbReference type="PDBsum" id="5D90"/>
<dbReference type="PDBsum" id="5E01"/>
<dbReference type="SMR" id="P44558"/>
<dbReference type="STRING" id="71421.HI_0186"/>
<dbReference type="EnsemblBacteria" id="AAC21856">
    <property type="protein sequence ID" value="AAC21856"/>
    <property type="gene ID" value="HI_0186"/>
</dbReference>
<dbReference type="KEGG" id="hin:HI_0186"/>
<dbReference type="PATRIC" id="fig|71421.8.peg.190"/>
<dbReference type="eggNOG" id="COG0789">
    <property type="taxonomic scope" value="Bacteria"/>
</dbReference>
<dbReference type="HOGENOM" id="CLU_060077_8_0_6"/>
<dbReference type="OrthoDB" id="9808480at2"/>
<dbReference type="PhylomeDB" id="P44558"/>
<dbReference type="BioCyc" id="HINF71421:G1GJ1-196-MONOMER"/>
<dbReference type="Proteomes" id="UP000000579">
    <property type="component" value="Chromosome"/>
</dbReference>
<dbReference type="GO" id="GO:0003677">
    <property type="term" value="F:DNA binding"/>
    <property type="evidence" value="ECO:0007669"/>
    <property type="project" value="UniProtKB-KW"/>
</dbReference>
<dbReference type="GO" id="GO:0003700">
    <property type="term" value="F:DNA-binding transcription factor activity"/>
    <property type="evidence" value="ECO:0000318"/>
    <property type="project" value="GO_Central"/>
</dbReference>
<dbReference type="GO" id="GO:0006355">
    <property type="term" value="P:regulation of DNA-templated transcription"/>
    <property type="evidence" value="ECO:0000318"/>
    <property type="project" value="GO_Central"/>
</dbReference>
<dbReference type="CDD" id="cd01109">
    <property type="entry name" value="HTH_YyaN"/>
    <property type="match status" value="1"/>
</dbReference>
<dbReference type="Gene3D" id="1.10.1660.10">
    <property type="match status" value="1"/>
</dbReference>
<dbReference type="InterPro" id="IPR009061">
    <property type="entry name" value="DNA-bd_dom_put_sf"/>
</dbReference>
<dbReference type="InterPro" id="IPR000551">
    <property type="entry name" value="MerR-type_HTH_dom"/>
</dbReference>
<dbReference type="InterPro" id="IPR047057">
    <property type="entry name" value="MerR_fam"/>
</dbReference>
<dbReference type="PANTHER" id="PTHR30204">
    <property type="entry name" value="REDOX-CYCLING DRUG-SENSING TRANSCRIPTIONAL ACTIVATOR SOXR"/>
    <property type="match status" value="1"/>
</dbReference>
<dbReference type="PANTHER" id="PTHR30204:SF83">
    <property type="entry name" value="TRANSCRIPTIONAL REGULATOR, MERR FAMILY"/>
    <property type="match status" value="1"/>
</dbReference>
<dbReference type="Pfam" id="PF13411">
    <property type="entry name" value="MerR_1"/>
    <property type="match status" value="1"/>
</dbReference>
<dbReference type="PRINTS" id="PR00040">
    <property type="entry name" value="HTHMERR"/>
</dbReference>
<dbReference type="SMART" id="SM00422">
    <property type="entry name" value="HTH_MERR"/>
    <property type="match status" value="1"/>
</dbReference>
<dbReference type="SUPFAM" id="SSF46955">
    <property type="entry name" value="Putative DNA-binding domain"/>
    <property type="match status" value="1"/>
</dbReference>
<dbReference type="PROSITE" id="PS00552">
    <property type="entry name" value="HTH_MERR_1"/>
    <property type="match status" value="1"/>
</dbReference>
<dbReference type="PROSITE" id="PS50937">
    <property type="entry name" value="HTH_MERR_2"/>
    <property type="match status" value="1"/>
</dbReference>
<accession>P44558</accession>
<name>Y186_HAEIN</name>
<evidence type="ECO:0000255" key="1">
    <source>
        <dbReference type="PROSITE-ProRule" id="PRU00254"/>
    </source>
</evidence>
<evidence type="ECO:0007829" key="2">
    <source>
        <dbReference type="PDB" id="5D8C"/>
    </source>
</evidence>
<keyword id="KW-0002">3D-structure</keyword>
<keyword id="KW-0238">DNA-binding</keyword>
<keyword id="KW-1185">Reference proteome</keyword>
<keyword id="KW-0804">Transcription</keyword>
<keyword id="KW-0805">Transcription regulation</keyword>
<organism>
    <name type="scientific">Haemophilus influenzae (strain ATCC 51907 / DSM 11121 / KW20 / Rd)</name>
    <dbReference type="NCBI Taxonomy" id="71421"/>
    <lineage>
        <taxon>Bacteria</taxon>
        <taxon>Pseudomonadati</taxon>
        <taxon>Pseudomonadota</taxon>
        <taxon>Gammaproteobacteria</taxon>
        <taxon>Pasteurellales</taxon>
        <taxon>Pasteurellaceae</taxon>
        <taxon>Haemophilus</taxon>
    </lineage>
</organism>
<reference key="1">
    <citation type="journal article" date="1995" name="Science">
        <title>Whole-genome random sequencing and assembly of Haemophilus influenzae Rd.</title>
        <authorList>
            <person name="Fleischmann R.D."/>
            <person name="Adams M.D."/>
            <person name="White O."/>
            <person name="Clayton R.A."/>
            <person name="Kirkness E.F."/>
            <person name="Kerlavage A.R."/>
            <person name="Bult C.J."/>
            <person name="Tomb J.-F."/>
            <person name="Dougherty B.A."/>
            <person name="Merrick J.M."/>
            <person name="McKenney K."/>
            <person name="Sutton G.G."/>
            <person name="FitzHugh W."/>
            <person name="Fields C.A."/>
            <person name="Gocayne J.D."/>
            <person name="Scott J.D."/>
            <person name="Shirley R."/>
            <person name="Liu L.-I."/>
            <person name="Glodek A."/>
            <person name="Kelley J.M."/>
            <person name="Weidman J.F."/>
            <person name="Phillips C.A."/>
            <person name="Spriggs T."/>
            <person name="Hedblom E."/>
            <person name="Cotton M.D."/>
            <person name="Utterback T.R."/>
            <person name="Hanna M.C."/>
            <person name="Nguyen D.T."/>
            <person name="Saudek D.M."/>
            <person name="Brandon R.C."/>
            <person name="Fine L.D."/>
            <person name="Fritchman J.L."/>
            <person name="Fuhrmann J.L."/>
            <person name="Geoghagen N.S.M."/>
            <person name="Gnehm C.L."/>
            <person name="McDonald L.A."/>
            <person name="Small K.V."/>
            <person name="Fraser C.M."/>
            <person name="Smith H.O."/>
            <person name="Venter J.C."/>
        </authorList>
    </citation>
    <scope>NUCLEOTIDE SEQUENCE [LARGE SCALE GENOMIC DNA]</scope>
    <source>
        <strain>ATCC 51907 / DSM 11121 / KW20 / Rd</strain>
    </source>
</reference>
<gene>
    <name type="ordered locus">HI_0186</name>
</gene>
<proteinExistence type="evidence at protein level"/>
<protein>
    <recommendedName>
        <fullName>Uncharacterized HTH-type transcriptional regulator HI_0186</fullName>
    </recommendedName>
</protein>